<evidence type="ECO:0000255" key="1">
    <source>
        <dbReference type="HAMAP-Rule" id="MF_00201"/>
    </source>
</evidence>
<reference key="1">
    <citation type="submission" date="2008-01" db="EMBL/GenBank/DDBJ databases">
        <title>Complete sequence of chromosome of Caulobacter sp. K31.</title>
        <authorList>
            <consortium name="US DOE Joint Genome Institute"/>
            <person name="Copeland A."/>
            <person name="Lucas S."/>
            <person name="Lapidus A."/>
            <person name="Barry K."/>
            <person name="Glavina del Rio T."/>
            <person name="Dalin E."/>
            <person name="Tice H."/>
            <person name="Pitluck S."/>
            <person name="Bruce D."/>
            <person name="Goodwin L."/>
            <person name="Thompson L.S."/>
            <person name="Brettin T."/>
            <person name="Detter J.C."/>
            <person name="Han C."/>
            <person name="Schmutz J."/>
            <person name="Larimer F."/>
            <person name="Land M."/>
            <person name="Hauser L."/>
            <person name="Kyrpides N."/>
            <person name="Kim E."/>
            <person name="Stephens C."/>
            <person name="Richardson P."/>
        </authorList>
    </citation>
    <scope>NUCLEOTIDE SEQUENCE [LARGE SCALE GENOMIC DNA]</scope>
    <source>
        <strain>K31</strain>
    </source>
</reference>
<sequence length="243" mass="25856">MEWEDEAFVLSARVHGETGAIVELLTQERGKFVAHVSGAASRRMKPFLQAGAKVIARYRARMSDQMGAATLEPMGEGPSSLFDEPLALSGLSAAASVAAGALPEREAHPGAFHALEALIAALAIPAIWPAVYVRFEAGLLQDLGFGLDLSKCAATGSLDDLVYVSPRTGRAVSRAAGQPYHDKLLPLPPFMLSAQGGLVEGDVKAGLDITGHFLEQFVFHPLNRPLPPARVWLLDRLGEAGRL</sequence>
<organism>
    <name type="scientific">Caulobacter sp. (strain K31)</name>
    <dbReference type="NCBI Taxonomy" id="366602"/>
    <lineage>
        <taxon>Bacteria</taxon>
        <taxon>Pseudomonadati</taxon>
        <taxon>Pseudomonadota</taxon>
        <taxon>Alphaproteobacteria</taxon>
        <taxon>Caulobacterales</taxon>
        <taxon>Caulobacteraceae</taxon>
        <taxon>Caulobacter</taxon>
    </lineage>
</organism>
<accession>B0T3I3</accession>
<dbReference type="EMBL" id="CP000927">
    <property type="protein sequence ID" value="ABZ70869.1"/>
    <property type="molecule type" value="Genomic_DNA"/>
</dbReference>
<dbReference type="SMR" id="B0T3I3"/>
<dbReference type="STRING" id="366602.Caul_1740"/>
<dbReference type="KEGG" id="cak:Caul_1740"/>
<dbReference type="eggNOG" id="COG1381">
    <property type="taxonomic scope" value="Bacteria"/>
</dbReference>
<dbReference type="HOGENOM" id="CLU_086029_0_0_5"/>
<dbReference type="OrthoDB" id="9804792at2"/>
<dbReference type="GO" id="GO:0043590">
    <property type="term" value="C:bacterial nucleoid"/>
    <property type="evidence" value="ECO:0007669"/>
    <property type="project" value="TreeGrafter"/>
</dbReference>
<dbReference type="GO" id="GO:0006310">
    <property type="term" value="P:DNA recombination"/>
    <property type="evidence" value="ECO:0007669"/>
    <property type="project" value="UniProtKB-UniRule"/>
</dbReference>
<dbReference type="GO" id="GO:0006302">
    <property type="term" value="P:double-strand break repair"/>
    <property type="evidence" value="ECO:0007669"/>
    <property type="project" value="TreeGrafter"/>
</dbReference>
<dbReference type="Gene3D" id="2.40.50.140">
    <property type="entry name" value="Nucleic acid-binding proteins"/>
    <property type="match status" value="1"/>
</dbReference>
<dbReference type="Gene3D" id="1.20.1440.120">
    <property type="entry name" value="Recombination protein O, C-terminal domain"/>
    <property type="match status" value="1"/>
</dbReference>
<dbReference type="HAMAP" id="MF_00201">
    <property type="entry name" value="RecO"/>
    <property type="match status" value="1"/>
</dbReference>
<dbReference type="InterPro" id="IPR037278">
    <property type="entry name" value="ARFGAP/RecO"/>
</dbReference>
<dbReference type="InterPro" id="IPR022572">
    <property type="entry name" value="DNA_rep/recomb_RecO_N"/>
</dbReference>
<dbReference type="InterPro" id="IPR012340">
    <property type="entry name" value="NA-bd_OB-fold"/>
</dbReference>
<dbReference type="InterPro" id="IPR003717">
    <property type="entry name" value="RecO"/>
</dbReference>
<dbReference type="InterPro" id="IPR042242">
    <property type="entry name" value="RecO_C"/>
</dbReference>
<dbReference type="NCBIfam" id="TIGR00613">
    <property type="entry name" value="reco"/>
    <property type="match status" value="1"/>
</dbReference>
<dbReference type="PANTHER" id="PTHR33991">
    <property type="entry name" value="DNA REPAIR PROTEIN RECO"/>
    <property type="match status" value="1"/>
</dbReference>
<dbReference type="PANTHER" id="PTHR33991:SF1">
    <property type="entry name" value="DNA REPAIR PROTEIN RECO"/>
    <property type="match status" value="1"/>
</dbReference>
<dbReference type="Pfam" id="PF02565">
    <property type="entry name" value="RecO_C"/>
    <property type="match status" value="1"/>
</dbReference>
<dbReference type="Pfam" id="PF11967">
    <property type="entry name" value="RecO_N"/>
    <property type="match status" value="1"/>
</dbReference>
<dbReference type="SUPFAM" id="SSF57863">
    <property type="entry name" value="ArfGap/RecO-like zinc finger"/>
    <property type="match status" value="1"/>
</dbReference>
<dbReference type="SUPFAM" id="SSF50249">
    <property type="entry name" value="Nucleic acid-binding proteins"/>
    <property type="match status" value="1"/>
</dbReference>
<proteinExistence type="inferred from homology"/>
<name>RECO_CAUSK</name>
<protein>
    <recommendedName>
        <fullName evidence="1">DNA repair protein RecO</fullName>
    </recommendedName>
    <alternativeName>
        <fullName evidence="1">Recombination protein O</fullName>
    </alternativeName>
</protein>
<comment type="function">
    <text evidence="1">Involved in DNA repair and RecF pathway recombination.</text>
</comment>
<comment type="similarity">
    <text evidence="1">Belongs to the RecO family.</text>
</comment>
<feature type="chain" id="PRO_1000077725" description="DNA repair protein RecO">
    <location>
        <begin position="1"/>
        <end position="243"/>
    </location>
</feature>
<keyword id="KW-0227">DNA damage</keyword>
<keyword id="KW-0233">DNA recombination</keyword>
<keyword id="KW-0234">DNA repair</keyword>
<gene>
    <name evidence="1" type="primary">recO</name>
    <name type="ordered locus">Caul_1740</name>
</gene>